<comment type="function">
    <text evidence="6 7 8 10">Intracellular phospholipase B that catalyzes the double deacylation of phosphatidylcholine (PC) to glycerophosphocholine (GroPCho). Plays an important role in membrane lipid homeostasis. Responsible for the rapid PC turnover in response to inositol, elevated temperatures, or when choline is present in the growth medium (PubMed:15044461, PubMed:15611060, PubMed:16777854). NTE1 activity impacts the repressing transcriptional activity of OPI1, the main regulator of phospholipid synthesis gene transcription (PubMed:19841481).</text>
</comment>
<comment type="catalytic activity">
    <reaction evidence="6">
        <text>a 1-acyl-sn-glycero-3-phosphocholine + H2O = sn-glycerol 3-phosphocholine + a fatty acid + H(+)</text>
        <dbReference type="Rhea" id="RHEA:15177"/>
        <dbReference type="ChEBI" id="CHEBI:15377"/>
        <dbReference type="ChEBI" id="CHEBI:15378"/>
        <dbReference type="ChEBI" id="CHEBI:16870"/>
        <dbReference type="ChEBI" id="CHEBI:28868"/>
        <dbReference type="ChEBI" id="CHEBI:58168"/>
        <dbReference type="EC" id="3.1.1.5"/>
    </reaction>
    <physiologicalReaction direction="left-to-right" evidence="13">
        <dbReference type="Rhea" id="RHEA:15178"/>
    </physiologicalReaction>
</comment>
<comment type="catalytic activity">
    <reaction evidence="6">
        <text>a 1,2-diacyl-sn-glycero-3-phosphocholine + 2 H2O = sn-glycerol 3-phosphocholine + 2 a carboxylate + 2 H(+)</text>
        <dbReference type="Rhea" id="RHEA:32907"/>
        <dbReference type="ChEBI" id="CHEBI:15377"/>
        <dbReference type="ChEBI" id="CHEBI:15378"/>
        <dbReference type="ChEBI" id="CHEBI:16870"/>
        <dbReference type="ChEBI" id="CHEBI:29067"/>
        <dbReference type="ChEBI" id="CHEBI:57643"/>
    </reaction>
    <physiologicalReaction direction="left-to-right" evidence="13">
        <dbReference type="Rhea" id="RHEA:32908"/>
    </physiologicalReaction>
</comment>
<comment type="activity regulation">
    <text evidence="6 7">Positively regulated by SEC14. Inhibited by organophosphorus esters in the order phenyl saligenin phosphate (PSP) &gt; phenyldipentyl phosphinate (PDPP) = diisopropyl fluorophosphate (DFP) &gt; and paraoxon (PXN).</text>
</comment>
<comment type="subcellular location">
    <subcellularLocation>
        <location evidence="4 6">Endoplasmic reticulum membrane</location>
        <topology evidence="4 6">Multi-pass membrane protein</topology>
    </subcellularLocation>
    <subcellularLocation>
        <location evidence="11">Lipid droplet</location>
    </subcellularLocation>
</comment>
<comment type="miscellaneous">
    <text evidence="5">Present with 521 molecules/cell in log phase SD medium.</text>
</comment>
<comment type="similarity">
    <text evidence="12">Belongs to the NTE family.</text>
</comment>
<dbReference type="EC" id="3.1.1.5" evidence="6"/>
<dbReference type="EMBL" id="Z46729">
    <property type="protein sequence ID" value="CAA86716.1"/>
    <property type="molecule type" value="Genomic_DNA"/>
</dbReference>
<dbReference type="EMBL" id="BK006946">
    <property type="protein sequence ID" value="DAA09838.1"/>
    <property type="molecule type" value="Genomic_DNA"/>
</dbReference>
<dbReference type="PIR" id="S49802">
    <property type="entry name" value="S49802"/>
</dbReference>
<dbReference type="RefSeq" id="NP_013652.1">
    <property type="nucleotide sequence ID" value="NM_001182418.1"/>
</dbReference>
<dbReference type="SMR" id="Q04958"/>
<dbReference type="BioGRID" id="35107">
    <property type="interactions" value="103"/>
</dbReference>
<dbReference type="DIP" id="DIP-5949N"/>
<dbReference type="FunCoup" id="Q04958">
    <property type="interactions" value="163"/>
</dbReference>
<dbReference type="IntAct" id="Q04958">
    <property type="interactions" value="25"/>
</dbReference>
<dbReference type="MINT" id="Q04958"/>
<dbReference type="STRING" id="4932.YML059C"/>
<dbReference type="SwissLipids" id="SLP:000000073"/>
<dbReference type="GlyGen" id="Q04958">
    <property type="glycosylation" value="4 sites, 1 O-linked glycan (4 sites)"/>
</dbReference>
<dbReference type="iPTMnet" id="Q04958"/>
<dbReference type="PaxDb" id="4932-YML059C"/>
<dbReference type="PeptideAtlas" id="Q04958"/>
<dbReference type="TopDownProteomics" id="Q04958"/>
<dbReference type="EnsemblFungi" id="YML059C_mRNA">
    <property type="protein sequence ID" value="YML059C"/>
    <property type="gene ID" value="YML059C"/>
</dbReference>
<dbReference type="GeneID" id="854943"/>
<dbReference type="KEGG" id="sce:YML059C"/>
<dbReference type="AGR" id="SGD:S000004524"/>
<dbReference type="SGD" id="S000004524">
    <property type="gene designation" value="NTE1"/>
</dbReference>
<dbReference type="VEuPathDB" id="FungiDB:YML059C"/>
<dbReference type="eggNOG" id="KOG2968">
    <property type="taxonomic scope" value="Eukaryota"/>
</dbReference>
<dbReference type="GeneTree" id="ENSGT00940000168388"/>
<dbReference type="HOGENOM" id="CLU_000960_1_1_1"/>
<dbReference type="InParanoid" id="Q04958"/>
<dbReference type="OMA" id="SSGYVWR"/>
<dbReference type="OrthoDB" id="421051at2759"/>
<dbReference type="BioCyc" id="MetaCyc:G3O-32654-MONOMER"/>
<dbReference type="BioCyc" id="YEAST:G3O-32654-MONOMER"/>
<dbReference type="Reactome" id="R-SCE-6814848">
    <property type="pathway name" value="Glycerophospholipid catabolism"/>
</dbReference>
<dbReference type="BioGRID-ORCS" id="854943">
    <property type="hits" value="2 hits in 10 CRISPR screens"/>
</dbReference>
<dbReference type="PRO" id="PR:Q04958"/>
<dbReference type="Proteomes" id="UP000002311">
    <property type="component" value="Chromosome XIII"/>
</dbReference>
<dbReference type="RNAct" id="Q04958">
    <property type="molecule type" value="protein"/>
</dbReference>
<dbReference type="GO" id="GO:0005783">
    <property type="term" value="C:endoplasmic reticulum"/>
    <property type="evidence" value="ECO:0000314"/>
    <property type="project" value="SGD"/>
</dbReference>
<dbReference type="GO" id="GO:0005789">
    <property type="term" value="C:endoplasmic reticulum membrane"/>
    <property type="evidence" value="ECO:0007669"/>
    <property type="project" value="UniProtKB-SubCell"/>
</dbReference>
<dbReference type="GO" id="GO:0005811">
    <property type="term" value="C:lipid droplet"/>
    <property type="evidence" value="ECO:0007669"/>
    <property type="project" value="UniProtKB-SubCell"/>
</dbReference>
<dbReference type="GO" id="GO:0004622">
    <property type="term" value="F:lysophospholipase activity"/>
    <property type="evidence" value="ECO:0000314"/>
    <property type="project" value="SGD"/>
</dbReference>
<dbReference type="GO" id="GO:0034638">
    <property type="term" value="P:phosphatidylcholine catabolic process"/>
    <property type="evidence" value="ECO:0000315"/>
    <property type="project" value="SGD"/>
</dbReference>
<dbReference type="GO" id="GO:0071071">
    <property type="term" value="P:regulation of phospholipid biosynthetic process"/>
    <property type="evidence" value="ECO:0000315"/>
    <property type="project" value="SGD"/>
</dbReference>
<dbReference type="CDD" id="cd00038">
    <property type="entry name" value="CAP_ED"/>
    <property type="match status" value="2"/>
</dbReference>
<dbReference type="CDD" id="cd07227">
    <property type="entry name" value="Pat_Fungal_NTE1"/>
    <property type="match status" value="1"/>
</dbReference>
<dbReference type="FunFam" id="2.60.120.10:FF:000193">
    <property type="entry name" value="Lysophospholipase NTE1"/>
    <property type="match status" value="1"/>
</dbReference>
<dbReference type="FunFam" id="2.60.120.10:FF:000245">
    <property type="entry name" value="Lysophospholipase NTE1"/>
    <property type="match status" value="1"/>
</dbReference>
<dbReference type="FunFam" id="3.40.1090.10:FF:000007">
    <property type="entry name" value="Lysophospholipase NTE1"/>
    <property type="match status" value="1"/>
</dbReference>
<dbReference type="FunFam" id="3.40.1090.10:FF:000013">
    <property type="entry name" value="Lysophospholipase NTE1"/>
    <property type="match status" value="1"/>
</dbReference>
<dbReference type="Gene3D" id="3.40.1090.10">
    <property type="entry name" value="Cytosolic phospholipase A2 catalytic domain"/>
    <property type="match status" value="2"/>
</dbReference>
<dbReference type="Gene3D" id="2.60.120.10">
    <property type="entry name" value="Jelly Rolls"/>
    <property type="match status" value="3"/>
</dbReference>
<dbReference type="InterPro" id="IPR016035">
    <property type="entry name" value="Acyl_Trfase/lysoPLipase"/>
</dbReference>
<dbReference type="InterPro" id="IPR000595">
    <property type="entry name" value="cNMP-bd_dom"/>
</dbReference>
<dbReference type="InterPro" id="IPR018490">
    <property type="entry name" value="cNMP-bd_dom_sf"/>
</dbReference>
<dbReference type="InterPro" id="IPR001423">
    <property type="entry name" value="LysoPLipase_patatin_CS"/>
</dbReference>
<dbReference type="InterPro" id="IPR050301">
    <property type="entry name" value="NTE"/>
</dbReference>
<dbReference type="InterPro" id="IPR056556">
    <property type="entry name" value="NTE1_P-loop_dom"/>
</dbReference>
<dbReference type="InterPro" id="IPR002641">
    <property type="entry name" value="PNPLA_dom"/>
</dbReference>
<dbReference type="InterPro" id="IPR014710">
    <property type="entry name" value="RmlC-like_jellyroll"/>
</dbReference>
<dbReference type="PANTHER" id="PTHR14226:SF29">
    <property type="entry name" value="NEUROPATHY TARGET ESTERASE SWS"/>
    <property type="match status" value="1"/>
</dbReference>
<dbReference type="PANTHER" id="PTHR14226">
    <property type="entry name" value="NEUROPATHY TARGET ESTERASE/SWISS CHEESE D.MELANOGASTER"/>
    <property type="match status" value="1"/>
</dbReference>
<dbReference type="Pfam" id="PF00027">
    <property type="entry name" value="cNMP_binding"/>
    <property type="match status" value="1"/>
</dbReference>
<dbReference type="Pfam" id="PF24179">
    <property type="entry name" value="NTE_Ploop"/>
    <property type="match status" value="1"/>
</dbReference>
<dbReference type="Pfam" id="PF01734">
    <property type="entry name" value="Patatin"/>
    <property type="match status" value="1"/>
</dbReference>
<dbReference type="SMART" id="SM00100">
    <property type="entry name" value="cNMP"/>
    <property type="match status" value="1"/>
</dbReference>
<dbReference type="SUPFAM" id="SSF51206">
    <property type="entry name" value="cAMP-binding domain-like"/>
    <property type="match status" value="3"/>
</dbReference>
<dbReference type="SUPFAM" id="SSF52151">
    <property type="entry name" value="FabD/lysophospholipase-like"/>
    <property type="match status" value="1"/>
</dbReference>
<dbReference type="PROSITE" id="PS50042">
    <property type="entry name" value="CNMP_BINDING_3"/>
    <property type="match status" value="2"/>
</dbReference>
<dbReference type="PROSITE" id="PS51635">
    <property type="entry name" value="PNPLA"/>
    <property type="match status" value="1"/>
</dbReference>
<dbReference type="PROSITE" id="PS01237">
    <property type="entry name" value="UPF0028"/>
    <property type="match status" value="1"/>
</dbReference>
<sequence length="1679" mass="187133">MRSMNCTTNNTNNTGQNTKNSLGSSFNSSNYTSYRFQTCLTDQIISEAQTWSLSSLFNFSWVVSYFVMGASRMIFRYGWYLATLSLLRIPKWIFFKLHHVQFTLSFWLILFALAVIVFVTYTIMKERILSQYKRLTPEFLPLENTGKSGSSANINAASTQSANAPPAIGSSTTGASSIIDSKKHSLKDGNENETFLSSYLDQFLSAIKIFGYLEKPVFHDLTKNMKTQKMDEGEILLLDSTIGFAIVVEGTLQLYHEVDHSDKDHGDETDHSDTDGLDDQDRDEEDEEEDDDIDNYDTKSCSSNLIDEEDESVGYIHLKNGLGNFQLLNTVKPGNPLTSLVSILNLFTHSMSSYGNSNFPSELSSPIDTTVSVNNMFCSSEQNFSNTDSMTNSTNSFPTFPSSMPKLVARAATDCTIGIIPPQSFAKLTAKYPRSASHIIQMVLTKLYHVTFQTAHDYLGLTKEIMDIEVLLNKSIVYELPYYLKEAVIRKFKTVDKSSGSADLEPKPKNSNASSKLKKPPKAKPSDGIIQSLKIANANANTSSNSLSLKPEFTHHPSSRHVVLGSRDQFNPGDLLSNVPLSRTMDILSPNPIHNNNRNKSNGINTSTSNQHKRSSRSSSNNASVHSKKFSSLSPELRNAQLSTSPLSLDNTSVHDHIHPSPVHLKGRVSPRPNLLPTTSFSAAQEETEDSALRMALVEAMLTYLGVNKSNMSVSSSSIANMSSLNSPQLNEMYSRRPSNASFLMSPHCTPSDISVASSFASPQTQPTMLRILPKEYTISNKRHNKSKSQDKKKPRAYKEELTPNLDFEDVKKDFAQGIQLKFFKKGTTIVEQNARGKGLFYIISGKVNVTTNSSSSVVSSMSKPEQVSAQSSHKGENPHHTQHLLYSVGSGGIVGYLSSLIGYKSFVNIVAKSDVYVGFLSSATLERLFDKYFLIYLRISDSLTKLLSSRLLKLDHALEWVHLRASETLFSQGDSANGIYVVLNGRLRQLQQQSLSNSNTSSEEVETQNIILGELAQGESFGEVEVLTAMNRYSTIVAVRDSELARIPRTLFELLALEHPSIMIRVSRLVAKKIVGDRTVPALTGDPLSIKENDFTSLIPPTKASYSSSLSHKPQNITSGTITFRTITILPITSGLPVEAFAMKLVQAFKQVGRTTIGLNQRTTLTHLGRHAFDRLSKLKQSGYFAELEEMYQTVVYISDTPVKSNWTRTCIAQGDCILLLADARSPSAEIGEYEKLLLNSKTTARTELILLHPERYVEPGLTHKWLRYRPWVHSHHHIQFSLTGTTLMNEGKMHVLNNGALALMDKLIQTEFSRKTQQNISKLLPDSIKNTVENFSSRFMKSKRQYYTPVHRHKNDFLRLARILSGQAIGLVLGGGGARGISHLGVIQAIEEQGIPVDVIGGTSIGSFVGGLYAKDYDLVPIYGRVKKFAGRISSIWRMLTDLTWPVTSYTTGHEFNRGIWKTFGDTRIEDFWIQYYCNSTNITDSVQEIHSFGYAWRYIRASMSLAGLLPPLEENGSMLLDGGYVDNLPVTEMRARGCQTIFAVDVGSADDRTPMEYGDSLNGFWIIFNRWNPFSSHPNIPNMAEIQVRLGYVASVNALEKAKNTPGVVYVRPPIEEYATLDFSKFEEIYHVGVDYGRIFLQGLIDDDKMPYIPGSQETTLNSQVPEFLLHRRNSI</sequence>
<reference key="1">
    <citation type="journal article" date="1997" name="Nature">
        <title>The nucleotide sequence of Saccharomyces cerevisiae chromosome XIII.</title>
        <authorList>
            <person name="Bowman S."/>
            <person name="Churcher C.M."/>
            <person name="Badcock K."/>
            <person name="Brown D."/>
            <person name="Chillingworth T."/>
            <person name="Connor R."/>
            <person name="Dedman K."/>
            <person name="Devlin K."/>
            <person name="Gentles S."/>
            <person name="Hamlin N."/>
            <person name="Hunt S."/>
            <person name="Jagels K."/>
            <person name="Lye G."/>
            <person name="Moule S."/>
            <person name="Odell C."/>
            <person name="Pearson D."/>
            <person name="Rajandream M.A."/>
            <person name="Rice P."/>
            <person name="Skelton J."/>
            <person name="Walsh S.V."/>
            <person name="Whitehead S."/>
            <person name="Barrell B.G."/>
        </authorList>
    </citation>
    <scope>NUCLEOTIDE SEQUENCE [LARGE SCALE GENOMIC DNA]</scope>
    <source>
        <strain>ATCC 204508 / S288c</strain>
    </source>
</reference>
<reference key="2">
    <citation type="journal article" date="2014" name="G3 (Bethesda)">
        <title>The reference genome sequence of Saccharomyces cerevisiae: Then and now.</title>
        <authorList>
            <person name="Engel S.R."/>
            <person name="Dietrich F.S."/>
            <person name="Fisk D.G."/>
            <person name="Binkley G."/>
            <person name="Balakrishnan R."/>
            <person name="Costanzo M.C."/>
            <person name="Dwight S.S."/>
            <person name="Hitz B.C."/>
            <person name="Karra K."/>
            <person name="Nash R.S."/>
            <person name="Weng S."/>
            <person name="Wong E.D."/>
            <person name="Lloyd P."/>
            <person name="Skrzypek M.S."/>
            <person name="Miyasato S.R."/>
            <person name="Simison M."/>
            <person name="Cherry J.M."/>
        </authorList>
    </citation>
    <scope>GENOME REANNOTATION</scope>
    <source>
        <strain>ATCC 204508 / S288c</strain>
    </source>
</reference>
<reference key="3">
    <citation type="journal article" date="2003" name="Nature">
        <title>Global analysis of protein localization in budding yeast.</title>
        <authorList>
            <person name="Huh W.-K."/>
            <person name="Falvo J.V."/>
            <person name="Gerke L.C."/>
            <person name="Carroll A.S."/>
            <person name="Howson R.W."/>
            <person name="Weissman J.S."/>
            <person name="O'Shea E.K."/>
        </authorList>
    </citation>
    <scope>SUBCELLULAR LOCATION [LARGE SCALE ANALYSIS]</scope>
</reference>
<reference key="4">
    <citation type="journal article" date="2003" name="Nature">
        <title>Global analysis of protein expression in yeast.</title>
        <authorList>
            <person name="Ghaemmaghami S."/>
            <person name="Huh W.-K."/>
            <person name="Bower K."/>
            <person name="Howson R.W."/>
            <person name="Belle A."/>
            <person name="Dephoure N."/>
            <person name="O'Shea E.K."/>
            <person name="Weissman J.S."/>
        </authorList>
    </citation>
    <scope>LEVEL OF PROTEIN EXPRESSION [LARGE SCALE ANALYSIS]</scope>
</reference>
<reference key="5">
    <citation type="journal article" date="2004" name="J. Biol. Chem.">
        <title>Neuropathy target esterase and its yeast homologue degrade phosphatidylcholine to glycerophosphocholine in living cells.</title>
        <authorList>
            <person name="Zaccheo O."/>
            <person name="Dinsdale D."/>
            <person name="Meacock P.A."/>
            <person name="Glynn P."/>
        </authorList>
    </citation>
    <scope>FUNCTION</scope>
    <scope>CATALYTIC ACTIVITY</scope>
    <scope>SUBCELLULAR LOCATION</scope>
    <scope>ACTIVITY REGULATION</scope>
    <scope>MUTAGENESIS OF SER-1406</scope>
</reference>
<reference key="6">
    <citation type="journal article" date="2005" name="J. Biol. Chem.">
        <title>Nte1p-mediated deacylation of phosphatidylcholine functionally interacts with Sec14p.</title>
        <authorList>
            <person name="Fernandez-Murray J.P."/>
            <person name="McMaster C.R."/>
        </authorList>
    </citation>
    <scope>FUNCTION</scope>
    <scope>ACTIVITY REGULATION</scope>
</reference>
<reference key="7">
    <citation type="journal article" date="2006" name="J. Biol. Chem.">
        <title>Inositol induces a profound alteration in the pattern and rate of synthesis and turnover of membrane lipids in Saccharomyces cerevisiae.</title>
        <authorList>
            <person name="Gaspar M.L."/>
            <person name="Aregullin M.A."/>
            <person name="Jesch S.A."/>
            <person name="Henry S.A."/>
        </authorList>
    </citation>
    <scope>FUNCTION</scope>
</reference>
<reference key="8">
    <citation type="journal article" date="2006" name="Proc. Natl. Acad. Sci. U.S.A.">
        <title>A global topology map of the Saccharomyces cerevisiae membrane proteome.</title>
        <authorList>
            <person name="Kim H."/>
            <person name="Melen K."/>
            <person name="Oesterberg M."/>
            <person name="von Heijne G."/>
        </authorList>
    </citation>
    <scope>TOPOLOGY [LARGE SCALE ANALYSIS]</scope>
    <source>
        <strain>ATCC 208353 / W303-1A</strain>
    </source>
</reference>
<reference key="9">
    <citation type="journal article" date="2007" name="J. Proteome Res.">
        <title>Large-scale phosphorylation analysis of alpha-factor-arrested Saccharomyces cerevisiae.</title>
        <authorList>
            <person name="Li X."/>
            <person name="Gerber S.A."/>
            <person name="Rudner A.D."/>
            <person name="Beausoleil S.A."/>
            <person name="Haas W."/>
            <person name="Villen J."/>
            <person name="Elias J.E."/>
            <person name="Gygi S.P."/>
        </authorList>
    </citation>
    <scope>PHOSPHORYLATION [LARGE SCALE ANALYSIS] AT SER-634</scope>
    <scope>IDENTIFICATION BY MASS SPECTROMETRY [LARGE SCALE ANALYSIS]</scope>
    <source>
        <strain>ADR376</strain>
    </source>
</reference>
<reference key="10">
    <citation type="journal article" date="2008" name="Mol. Cell. Proteomics">
        <title>A multidimensional chromatography technology for in-depth phosphoproteome analysis.</title>
        <authorList>
            <person name="Albuquerque C.P."/>
            <person name="Smolka M.B."/>
            <person name="Payne S.H."/>
            <person name="Bafna V."/>
            <person name="Eng J."/>
            <person name="Zhou H."/>
        </authorList>
    </citation>
    <scope>PHOSPHORYLATION [LARGE SCALE ANALYSIS] AT SER-634 AND THR-803</scope>
    <scope>IDENTIFICATION BY MASS SPECTROMETRY [LARGE SCALE ANALYSIS]</scope>
</reference>
<reference key="11">
    <citation type="journal article" date="2009" name="J. Biol. Chem.">
        <title>NTE1-encoded phosphatidylcholine phospholipase B regulates transcription of phospholipid biosynthetic genes.</title>
        <authorList>
            <person name="Fernandez-Murray J.P."/>
            <person name="Gaspard G.J."/>
            <person name="Jesch S.A."/>
            <person name="McMaster C.R."/>
        </authorList>
    </citation>
    <scope>FUNCTION</scope>
</reference>
<reference key="12">
    <citation type="journal article" date="2009" name="Science">
        <title>Global analysis of Cdk1 substrate phosphorylation sites provides insights into evolution.</title>
        <authorList>
            <person name="Holt L.J."/>
            <person name="Tuch B.B."/>
            <person name="Villen J."/>
            <person name="Johnson A.D."/>
            <person name="Gygi S.P."/>
            <person name="Morgan D.O."/>
        </authorList>
    </citation>
    <scope>PHOSPHORYLATION [LARGE SCALE ANALYSIS] AT SER-300; SER-312; SER-632; SER-634; SER-653; SER-661; SER-670; SER-680 AND SER-739</scope>
    <scope>IDENTIFICATION BY MASS SPECTROMETRY [LARGE SCALE ANALYSIS]</scope>
</reference>
<reference key="13">
    <citation type="journal article" date="2014" name="J. Lipid Res.">
        <title>High-confidence proteomic analysis of yeast lipid droplets identifies additional droplet proteins and reveals connections to dolichol synthesis and sterol acetylation.</title>
        <authorList>
            <person name="Currie E."/>
            <person name="Guo X."/>
            <person name="Christiano R."/>
            <person name="Chitraju C."/>
            <person name="Kory N."/>
            <person name="Harrison K."/>
            <person name="Haas J."/>
            <person name="Walther T.C."/>
            <person name="Farese R.V. Jr."/>
        </authorList>
    </citation>
    <scope>SUBCELLULAR LOCATION</scope>
</reference>
<accession>Q04958</accession>
<accession>D6VZB4</accession>
<proteinExistence type="evidence at protein level"/>
<organism>
    <name type="scientific">Saccharomyces cerevisiae (strain ATCC 204508 / S288c)</name>
    <name type="common">Baker's yeast</name>
    <dbReference type="NCBI Taxonomy" id="559292"/>
    <lineage>
        <taxon>Eukaryota</taxon>
        <taxon>Fungi</taxon>
        <taxon>Dikarya</taxon>
        <taxon>Ascomycota</taxon>
        <taxon>Saccharomycotina</taxon>
        <taxon>Saccharomycetes</taxon>
        <taxon>Saccharomycetales</taxon>
        <taxon>Saccharomycetaceae</taxon>
        <taxon>Saccharomyces</taxon>
    </lineage>
</organism>
<name>NTE1_YEAST</name>
<protein>
    <recommendedName>
        <fullName>Lysophospholipase NTE1</fullName>
        <ecNumber evidence="6">3.1.1.5</ecNumber>
    </recommendedName>
    <alternativeName>
        <fullName>Intracellular phospholipase B</fullName>
    </alternativeName>
    <alternativeName>
        <fullName>Neuropathy target esterase homolog</fullName>
    </alternativeName>
</protein>
<keyword id="KW-0256">Endoplasmic reticulum</keyword>
<keyword id="KW-0378">Hydrolase</keyword>
<keyword id="KW-0442">Lipid degradation</keyword>
<keyword id="KW-0551">Lipid droplet</keyword>
<keyword id="KW-0443">Lipid metabolism</keyword>
<keyword id="KW-0472">Membrane</keyword>
<keyword id="KW-0597">Phosphoprotein</keyword>
<keyword id="KW-1185">Reference proteome</keyword>
<keyword id="KW-0677">Repeat</keyword>
<keyword id="KW-0812">Transmembrane</keyword>
<keyword id="KW-1133">Transmembrane helix</keyword>
<evidence type="ECO:0000255" key="1"/>
<evidence type="ECO:0000255" key="2">
    <source>
        <dbReference type="PROSITE-ProRule" id="PRU01161"/>
    </source>
</evidence>
<evidence type="ECO:0000256" key="3">
    <source>
        <dbReference type="SAM" id="MobiDB-lite"/>
    </source>
</evidence>
<evidence type="ECO:0000269" key="4">
    <source>
    </source>
</evidence>
<evidence type="ECO:0000269" key="5">
    <source>
    </source>
</evidence>
<evidence type="ECO:0000269" key="6">
    <source>
    </source>
</evidence>
<evidence type="ECO:0000269" key="7">
    <source>
    </source>
</evidence>
<evidence type="ECO:0000269" key="8">
    <source>
    </source>
</evidence>
<evidence type="ECO:0000269" key="9">
    <source>
    </source>
</evidence>
<evidence type="ECO:0000269" key="10">
    <source>
    </source>
</evidence>
<evidence type="ECO:0000269" key="11">
    <source>
    </source>
</evidence>
<evidence type="ECO:0000305" key="12"/>
<evidence type="ECO:0000305" key="13">
    <source>
    </source>
</evidence>
<evidence type="ECO:0000305" key="14">
    <source>
    </source>
</evidence>
<evidence type="ECO:0007744" key="15">
    <source>
    </source>
</evidence>
<evidence type="ECO:0007744" key="16">
    <source>
    </source>
</evidence>
<evidence type="ECO:0007744" key="17">
    <source>
    </source>
</evidence>
<feature type="chain" id="PRO_0000172528" description="Lysophospholipase NTE1">
    <location>
        <begin position="1"/>
        <end position="1679"/>
    </location>
</feature>
<feature type="topological domain" description="Cytoplasmic" evidence="14">
    <location>
        <begin position="1"/>
        <end position="49"/>
    </location>
</feature>
<feature type="transmembrane region" description="Helical" evidence="1">
    <location>
        <begin position="50"/>
        <end position="70"/>
    </location>
</feature>
<feature type="topological domain" description="Lumenal" evidence="14">
    <location>
        <begin position="71"/>
        <end position="103"/>
    </location>
</feature>
<feature type="transmembrane region" description="Helical" evidence="1">
    <location>
        <begin position="104"/>
        <end position="124"/>
    </location>
</feature>
<feature type="topological domain" description="Cytoplasmic" evidence="9">
    <location>
        <begin position="125"/>
        <end position="1679"/>
    </location>
</feature>
<feature type="domain" description="PNPLA" evidence="2">
    <location>
        <begin position="1373"/>
        <end position="1537"/>
    </location>
</feature>
<feature type="region of interest" description="Disordered" evidence="3">
    <location>
        <begin position="1"/>
        <end position="21"/>
    </location>
</feature>
<feature type="region of interest" description="Disordered" evidence="3">
    <location>
        <begin position="261"/>
        <end position="304"/>
    </location>
</feature>
<feature type="region of interest" description="Disordered" evidence="3">
    <location>
        <begin position="498"/>
        <end position="527"/>
    </location>
</feature>
<feature type="region of interest" description="Disordered" evidence="3">
    <location>
        <begin position="586"/>
        <end position="672"/>
    </location>
</feature>
<feature type="region of interest" description="Disordered" evidence="3">
    <location>
        <begin position="775"/>
        <end position="800"/>
    </location>
</feature>
<feature type="region of interest" description="Disordered" evidence="3">
    <location>
        <begin position="855"/>
        <end position="882"/>
    </location>
</feature>
<feature type="short sequence motif" description="GXGXXG" evidence="2">
    <location>
        <begin position="1377"/>
        <end position="1382"/>
    </location>
</feature>
<feature type="short sequence motif" description="GXSXG" evidence="2">
    <location>
        <begin position="1404"/>
        <end position="1408"/>
    </location>
</feature>
<feature type="short sequence motif" description="DGA/G" evidence="2">
    <location>
        <begin position="1524"/>
        <end position="1526"/>
    </location>
</feature>
<feature type="compositionally biased region" description="Low complexity" evidence="3">
    <location>
        <begin position="1"/>
        <end position="20"/>
    </location>
</feature>
<feature type="compositionally biased region" description="Basic and acidic residues" evidence="3">
    <location>
        <begin position="261"/>
        <end position="274"/>
    </location>
</feature>
<feature type="compositionally biased region" description="Acidic residues" evidence="3">
    <location>
        <begin position="275"/>
        <end position="295"/>
    </location>
</feature>
<feature type="compositionally biased region" description="Polar residues" evidence="3">
    <location>
        <begin position="592"/>
        <end position="606"/>
    </location>
</feature>
<feature type="compositionally biased region" description="Polar residues" evidence="3">
    <location>
        <begin position="630"/>
        <end position="652"/>
    </location>
</feature>
<feature type="compositionally biased region" description="Basic and acidic residues" evidence="3">
    <location>
        <begin position="788"/>
        <end position="800"/>
    </location>
</feature>
<feature type="compositionally biased region" description="Polar residues" evidence="3">
    <location>
        <begin position="862"/>
        <end position="873"/>
    </location>
</feature>
<feature type="active site" description="Nucleophile" evidence="2">
    <location>
        <position position="1406"/>
    </location>
</feature>
<feature type="active site" description="Proton acceptor" evidence="2">
    <location>
        <position position="1524"/>
    </location>
</feature>
<feature type="binding site">
    <location>
        <begin position="803"/>
        <end position="947"/>
    </location>
    <ligand>
        <name>a nucleoside 3',5'-cyclic phosphate</name>
        <dbReference type="ChEBI" id="CHEBI:58464"/>
        <label>1</label>
    </ligand>
</feature>
<feature type="binding site">
    <location>
        <begin position="943"/>
        <end position="1074"/>
    </location>
    <ligand>
        <name>a nucleoside 3',5'-cyclic phosphate</name>
        <dbReference type="ChEBI" id="CHEBI:58464"/>
        <label>2</label>
    </ligand>
</feature>
<feature type="modified residue" description="Phosphoserine" evidence="17">
    <location>
        <position position="300"/>
    </location>
</feature>
<feature type="modified residue" description="Phosphoserine" evidence="17">
    <location>
        <position position="312"/>
    </location>
</feature>
<feature type="modified residue" description="Phosphoserine" evidence="17">
    <location>
        <position position="632"/>
    </location>
</feature>
<feature type="modified residue" description="Phosphoserine" evidence="15 16 17">
    <location>
        <position position="634"/>
    </location>
</feature>
<feature type="modified residue" description="Phosphoserine" evidence="17">
    <location>
        <position position="653"/>
    </location>
</feature>
<feature type="modified residue" description="Phosphoserine" evidence="17">
    <location>
        <position position="661"/>
    </location>
</feature>
<feature type="modified residue" description="Phosphoserine" evidence="17">
    <location>
        <position position="670"/>
    </location>
</feature>
<feature type="modified residue" description="Phosphoserine" evidence="17">
    <location>
        <position position="680"/>
    </location>
</feature>
<feature type="modified residue" description="Phosphoserine" evidence="17">
    <location>
        <position position="739"/>
    </location>
</feature>
<feature type="modified residue" description="Phosphothreonine" evidence="16">
    <location>
        <position position="803"/>
    </location>
</feature>
<feature type="mutagenesis site" description="Loss of esterase activity." evidence="6">
    <original>S</original>
    <variation>A</variation>
    <location>
        <position position="1406"/>
    </location>
</feature>
<gene>
    <name type="primary">NTE1</name>
    <name type="ordered locus">YML059C</name>
    <name type="ORF">YM9958.03C</name>
</gene>